<keyword id="KW-1015">Disulfide bond</keyword>
<keyword id="KW-0378">Hydrolase</keyword>
<keyword id="KW-0645">Protease</keyword>
<keyword id="KW-1185">Reference proteome</keyword>
<keyword id="KW-0720">Serine protease</keyword>
<keyword id="KW-0732">Signal</keyword>
<keyword id="KW-0865">Zymogen</keyword>
<comment type="similarity">
    <text evidence="2">Belongs to the peptidase S1 family. Granzyme subfamily.</text>
</comment>
<evidence type="ECO:0000250" key="1"/>
<evidence type="ECO:0000255" key="2">
    <source>
        <dbReference type="PROSITE-ProRule" id="PRU00274"/>
    </source>
</evidence>
<proteinExistence type="inferred from homology"/>
<name>MCPTX_MOUSE</name>
<dbReference type="EC" id="3.4.21.-"/>
<dbReference type="EMBL" id="M57401">
    <property type="protein sequence ID" value="AAA39990.1"/>
    <property type="molecule type" value="Genomic_DNA"/>
</dbReference>
<dbReference type="PIR" id="A38678">
    <property type="entry name" value="A38678"/>
</dbReference>
<dbReference type="SMR" id="Q00356"/>
<dbReference type="BioGRID" id="201362">
    <property type="interactions" value="1"/>
</dbReference>
<dbReference type="FunCoup" id="Q00356">
    <property type="interactions" value="218"/>
</dbReference>
<dbReference type="MEROPS" id="S01.304"/>
<dbReference type="AGR" id="MGI:102792"/>
<dbReference type="MGI" id="MGI:102792">
    <property type="gene designation" value="Mcptl"/>
</dbReference>
<dbReference type="InParanoid" id="Q00356"/>
<dbReference type="PRO" id="PR:Q00356"/>
<dbReference type="Proteomes" id="UP000000589">
    <property type="component" value="Unplaced"/>
</dbReference>
<dbReference type="RNAct" id="Q00356">
    <property type="molecule type" value="protein"/>
</dbReference>
<dbReference type="GO" id="GO:0004252">
    <property type="term" value="F:serine-type endopeptidase activity"/>
    <property type="evidence" value="ECO:0007669"/>
    <property type="project" value="InterPro"/>
</dbReference>
<dbReference type="GO" id="GO:0006508">
    <property type="term" value="P:proteolysis"/>
    <property type="evidence" value="ECO:0007669"/>
    <property type="project" value="UniProtKB-KW"/>
</dbReference>
<dbReference type="CDD" id="cd00190">
    <property type="entry name" value="Tryp_SPc"/>
    <property type="match status" value="1"/>
</dbReference>
<dbReference type="FunFam" id="2.40.10.10:FF:000014">
    <property type="entry name" value="Complement factor D"/>
    <property type="match status" value="1"/>
</dbReference>
<dbReference type="FunFam" id="2.40.10.10:FF:000068">
    <property type="entry name" value="transmembrane protease serine 2"/>
    <property type="match status" value="1"/>
</dbReference>
<dbReference type="Gene3D" id="2.40.10.10">
    <property type="entry name" value="Trypsin-like serine proteases"/>
    <property type="match status" value="2"/>
</dbReference>
<dbReference type="InterPro" id="IPR009003">
    <property type="entry name" value="Peptidase_S1_PA"/>
</dbReference>
<dbReference type="InterPro" id="IPR043504">
    <property type="entry name" value="Peptidase_S1_PA_chymotrypsin"/>
</dbReference>
<dbReference type="InterPro" id="IPR001314">
    <property type="entry name" value="Peptidase_S1A"/>
</dbReference>
<dbReference type="InterPro" id="IPR001254">
    <property type="entry name" value="Trypsin_dom"/>
</dbReference>
<dbReference type="InterPro" id="IPR018114">
    <property type="entry name" value="TRYPSIN_HIS"/>
</dbReference>
<dbReference type="InterPro" id="IPR033116">
    <property type="entry name" value="TRYPSIN_SER"/>
</dbReference>
<dbReference type="PANTHER" id="PTHR24271:SF23">
    <property type="entry name" value="CHYMASE 2, MAST CELL-RELATED"/>
    <property type="match status" value="1"/>
</dbReference>
<dbReference type="PANTHER" id="PTHR24271">
    <property type="entry name" value="KALLIKREIN-RELATED"/>
    <property type="match status" value="1"/>
</dbReference>
<dbReference type="Pfam" id="PF00089">
    <property type="entry name" value="Trypsin"/>
    <property type="match status" value="1"/>
</dbReference>
<dbReference type="PRINTS" id="PR00722">
    <property type="entry name" value="CHYMOTRYPSIN"/>
</dbReference>
<dbReference type="SMART" id="SM00020">
    <property type="entry name" value="Tryp_SPc"/>
    <property type="match status" value="1"/>
</dbReference>
<dbReference type="SUPFAM" id="SSF50494">
    <property type="entry name" value="Trypsin-like serine proteases"/>
    <property type="match status" value="1"/>
</dbReference>
<dbReference type="PROSITE" id="PS50240">
    <property type="entry name" value="TRYPSIN_DOM"/>
    <property type="match status" value="1"/>
</dbReference>
<dbReference type="PROSITE" id="PS00134">
    <property type="entry name" value="TRYPSIN_HIS"/>
    <property type="match status" value="1"/>
</dbReference>
<dbReference type="PROSITE" id="PS00135">
    <property type="entry name" value="TRYPSIN_SER"/>
    <property type="match status" value="1"/>
</dbReference>
<reference key="1">
    <citation type="journal article" date="1991" name="J. Biol. Chem.">
        <title>Cloning of the cDNA and gene for mouse mast cell protease 4. Demonstration of its late transcription in mast cell subclasses and analysis of its homology to subclass-specific neutral proteases of the mouse and rat.</title>
        <authorList>
            <person name="Serafin W.E."/>
            <person name="Sullivan T.P."/>
            <person name="Conder G.A."/>
            <person name="Ebrahimi A."/>
            <person name="Marcham P."/>
            <person name="Johnson S.S."/>
            <person name="Austen K.F."/>
            <person name="Reynolds D.S."/>
        </authorList>
    </citation>
    <scope>NUCLEOTIDE SEQUENCE [GENOMIC DNA]</scope>
</reference>
<gene>
    <name type="primary">Mcptl</name>
</gene>
<protein>
    <recommendedName>
        <fullName>Mast cell protease-like protein</fullName>
        <ecNumber>3.4.21.-</ecNumber>
    </recommendedName>
</protein>
<feature type="signal peptide" evidence="1">
    <location>
        <begin position="1"/>
        <end position="18"/>
    </location>
</feature>
<feature type="propeptide" id="PRO_0000027461" description="Activation peptide" evidence="1">
    <location>
        <begin position="19"/>
        <end position="20"/>
    </location>
</feature>
<feature type="chain" id="PRO_0000027462" description="Mast cell protease-like protein">
    <location>
        <begin position="21"/>
        <end position="246"/>
    </location>
</feature>
<feature type="domain" description="Peptidase S1" evidence="2">
    <location>
        <begin position="21"/>
        <end position="244"/>
    </location>
</feature>
<feature type="active site" description="Charge relay system" evidence="1">
    <location>
        <position position="65"/>
    </location>
</feature>
<feature type="active site" description="Charge relay system" evidence="1">
    <location>
        <position position="109"/>
    </location>
</feature>
<feature type="active site" description="Charge relay system" evidence="1">
    <location>
        <position position="202"/>
    </location>
</feature>
<feature type="disulfide bond" evidence="2">
    <location>
        <begin position="50"/>
        <end position="66"/>
    </location>
</feature>
<feature type="disulfide bond" evidence="2">
    <location>
        <begin position="143"/>
        <end position="208"/>
    </location>
</feature>
<feature type="disulfide bond" evidence="2">
    <location>
        <begin position="174"/>
        <end position="187"/>
    </location>
</feature>
<accession>Q00356</accession>
<organism>
    <name type="scientific">Mus musculus</name>
    <name type="common">Mouse</name>
    <dbReference type="NCBI Taxonomy" id="10090"/>
    <lineage>
        <taxon>Eukaryota</taxon>
        <taxon>Metazoa</taxon>
        <taxon>Chordata</taxon>
        <taxon>Craniata</taxon>
        <taxon>Vertebrata</taxon>
        <taxon>Euteleostomi</taxon>
        <taxon>Mammalia</taxon>
        <taxon>Eutheria</taxon>
        <taxon>Euarchontoglires</taxon>
        <taxon>Glires</taxon>
        <taxon>Rodentia</taxon>
        <taxon>Myomorpha</taxon>
        <taxon>Muroidea</taxon>
        <taxon>Muridae</taxon>
        <taxon>Murinae</taxon>
        <taxon>Mus</taxon>
        <taxon>Mus</taxon>
    </lineage>
</organism>
<sequence length="246" mass="26775">MQALLFLMALLLPSGAGAEEIIGGVESEPHSRPYMAYVNTFRRKGYVAICGGFLITPQFVMTAAHCRGRRMTVTLGAHNVRKRECTQQKIKVEKYILPPNYNVSSKFNDIVLLKLKKQANLTSAVDVVPLPGPSDFAKPGTMCWAAGWGRTGVKKIISHTLREVELKIVGEKACKIFRHYKDSLQICVGSSTKVASVYMGDSGGPLLCAGVAHGIVSSGRGNAKPPAIFTRISPHVPWINRVIKGK</sequence>